<keyword id="KW-1015">Disulfide bond</keyword>
<keyword id="KW-0325">Glycoprotein</keyword>
<keyword id="KW-0446">Lipid-binding</keyword>
<keyword id="KW-0873">Pyrrolidone carboxylic acid</keyword>
<keyword id="KW-1185">Reference proteome</keyword>
<keyword id="KW-0964">Secreted</keyword>
<keyword id="KW-0732">Signal</keyword>
<keyword id="KW-0813">Transport</keyword>
<gene>
    <name type="primary">APOD</name>
    <name type="ORF">QccE-15083</name>
</gene>
<comment type="function">
    <text evidence="1">APOD occurs in the macromolecular complex with lecithin-cholesterol acyltransferase. It is probably involved in the transport and binding of bilin. Appears to be able to transport a variety of ligands in a number of different contexts (By similarity).</text>
</comment>
<comment type="subunit">
    <text evidence="1">Homodimer.</text>
</comment>
<comment type="subcellular location">
    <subcellularLocation>
        <location evidence="1">Secreted</location>
    </subcellularLocation>
</comment>
<comment type="similarity">
    <text evidence="4">Belongs to the calycin superfamily. Lipocalin family.</text>
</comment>
<dbReference type="EMBL" id="AB072021">
    <property type="protein sequence ID" value="BAB86810.1"/>
    <property type="molecule type" value="mRNA"/>
</dbReference>
<dbReference type="SMR" id="Q8SPI0"/>
<dbReference type="STRING" id="9541.ENSMFAP00000032617"/>
<dbReference type="GlyCosmos" id="Q8SPI0">
    <property type="glycosylation" value="2 sites, No reported glycans"/>
</dbReference>
<dbReference type="VEuPathDB" id="HostDB:ENSMFAG00000002871"/>
<dbReference type="eggNOG" id="KOG4824">
    <property type="taxonomic scope" value="Eukaryota"/>
</dbReference>
<dbReference type="OMA" id="HKYLGRW"/>
<dbReference type="Proteomes" id="UP000233100">
    <property type="component" value="Chromosome 2"/>
</dbReference>
<dbReference type="GO" id="GO:0022626">
    <property type="term" value="C:cytosolic ribosome"/>
    <property type="evidence" value="ECO:0000250"/>
    <property type="project" value="UniProtKB"/>
</dbReference>
<dbReference type="GO" id="GO:0030425">
    <property type="term" value="C:dendrite"/>
    <property type="evidence" value="ECO:0000250"/>
    <property type="project" value="UniProtKB"/>
</dbReference>
<dbReference type="GO" id="GO:0005615">
    <property type="term" value="C:extracellular space"/>
    <property type="evidence" value="ECO:0000250"/>
    <property type="project" value="UniProtKB"/>
</dbReference>
<dbReference type="GO" id="GO:0043025">
    <property type="term" value="C:neuronal cell body"/>
    <property type="evidence" value="ECO:0000250"/>
    <property type="project" value="UniProtKB"/>
</dbReference>
<dbReference type="GO" id="GO:0048471">
    <property type="term" value="C:perinuclear region of cytoplasm"/>
    <property type="evidence" value="ECO:0000250"/>
    <property type="project" value="UniProtKB"/>
</dbReference>
<dbReference type="GO" id="GO:0015485">
    <property type="term" value="F:cholesterol binding"/>
    <property type="evidence" value="ECO:0000250"/>
    <property type="project" value="UniProtKB"/>
</dbReference>
<dbReference type="GO" id="GO:0007420">
    <property type="term" value="P:brain development"/>
    <property type="evidence" value="ECO:0007669"/>
    <property type="project" value="InterPro"/>
</dbReference>
<dbReference type="GO" id="GO:0006006">
    <property type="term" value="P:glucose metabolic process"/>
    <property type="evidence" value="ECO:0000250"/>
    <property type="project" value="UniProtKB"/>
</dbReference>
<dbReference type="GO" id="GO:0006629">
    <property type="term" value="P:lipid metabolic process"/>
    <property type="evidence" value="ECO:0000250"/>
    <property type="project" value="UniProtKB"/>
</dbReference>
<dbReference type="GO" id="GO:0006869">
    <property type="term" value="P:lipid transport"/>
    <property type="evidence" value="ECO:0007669"/>
    <property type="project" value="InterPro"/>
</dbReference>
<dbReference type="GO" id="GO:1900016">
    <property type="term" value="P:negative regulation of cytokine production involved in inflammatory response"/>
    <property type="evidence" value="ECO:0000250"/>
    <property type="project" value="UniProtKB"/>
</dbReference>
<dbReference type="GO" id="GO:0051895">
    <property type="term" value="P:negative regulation of focal adhesion assembly"/>
    <property type="evidence" value="ECO:0000250"/>
    <property type="project" value="UniProtKB"/>
</dbReference>
<dbReference type="GO" id="GO:0060588">
    <property type="term" value="P:negative regulation of lipoprotein lipid oxidation"/>
    <property type="evidence" value="ECO:0000250"/>
    <property type="project" value="UniProtKB"/>
</dbReference>
<dbReference type="GO" id="GO:0071638">
    <property type="term" value="P:negative regulation of monocyte chemotactic protein-1 production"/>
    <property type="evidence" value="ECO:0000250"/>
    <property type="project" value="UniProtKB"/>
</dbReference>
<dbReference type="GO" id="GO:0010642">
    <property type="term" value="P:negative regulation of platelet-derived growth factor receptor signaling pathway"/>
    <property type="evidence" value="ECO:0000250"/>
    <property type="project" value="UniProtKB"/>
</dbReference>
<dbReference type="GO" id="GO:0042308">
    <property type="term" value="P:negative regulation of protein import into nucleus"/>
    <property type="evidence" value="ECO:0000250"/>
    <property type="project" value="UniProtKB"/>
</dbReference>
<dbReference type="GO" id="GO:0048662">
    <property type="term" value="P:negative regulation of smooth muscle cell proliferation"/>
    <property type="evidence" value="ECO:0000250"/>
    <property type="project" value="UniProtKB"/>
</dbReference>
<dbReference type="GO" id="GO:2000098">
    <property type="term" value="P:negative regulation of smooth muscle cell-matrix adhesion"/>
    <property type="evidence" value="ECO:0000250"/>
    <property type="project" value="UniProtKB"/>
</dbReference>
<dbReference type="GO" id="GO:2000405">
    <property type="term" value="P:negative regulation of T cell migration"/>
    <property type="evidence" value="ECO:0000250"/>
    <property type="project" value="UniProtKB"/>
</dbReference>
<dbReference type="GO" id="GO:0014012">
    <property type="term" value="P:peripheral nervous system axon regeneration"/>
    <property type="evidence" value="ECO:0000250"/>
    <property type="project" value="UniProtKB"/>
</dbReference>
<dbReference type="GO" id="GO:0048678">
    <property type="term" value="P:response to axon injury"/>
    <property type="evidence" value="ECO:0000250"/>
    <property type="project" value="UniProtKB"/>
</dbReference>
<dbReference type="GO" id="GO:0000302">
    <property type="term" value="P:response to reactive oxygen species"/>
    <property type="evidence" value="ECO:0000250"/>
    <property type="project" value="UniProtKB"/>
</dbReference>
<dbReference type="GO" id="GO:0042246">
    <property type="term" value="P:tissue regeneration"/>
    <property type="evidence" value="ECO:0000250"/>
    <property type="project" value="UniProtKB"/>
</dbReference>
<dbReference type="CDD" id="cd19437">
    <property type="entry name" value="lipocalin_apoD-like"/>
    <property type="match status" value="1"/>
</dbReference>
<dbReference type="FunFam" id="2.40.128.20:FF:000003">
    <property type="entry name" value="Apolipoprotein D"/>
    <property type="match status" value="1"/>
</dbReference>
<dbReference type="Gene3D" id="2.40.128.20">
    <property type="match status" value="1"/>
</dbReference>
<dbReference type="InterPro" id="IPR026222">
    <property type="entry name" value="ApoD_vertbrte"/>
</dbReference>
<dbReference type="InterPro" id="IPR002969">
    <property type="entry name" value="ApolipopD"/>
</dbReference>
<dbReference type="InterPro" id="IPR012674">
    <property type="entry name" value="Calycin"/>
</dbReference>
<dbReference type="InterPro" id="IPR022271">
    <property type="entry name" value="Lipocalin_ApoD"/>
</dbReference>
<dbReference type="InterPro" id="IPR022272">
    <property type="entry name" value="Lipocalin_CS"/>
</dbReference>
<dbReference type="InterPro" id="IPR000566">
    <property type="entry name" value="Lipocln_cytosolic_FA-bd_dom"/>
</dbReference>
<dbReference type="PANTHER" id="PTHR10612">
    <property type="entry name" value="APOLIPOPROTEIN D"/>
    <property type="match status" value="1"/>
</dbReference>
<dbReference type="PANTHER" id="PTHR10612:SF34">
    <property type="entry name" value="APOLIPOPROTEIN D"/>
    <property type="match status" value="1"/>
</dbReference>
<dbReference type="Pfam" id="PF08212">
    <property type="entry name" value="Lipocalin_2"/>
    <property type="match status" value="1"/>
</dbReference>
<dbReference type="PIRSF" id="PIRSF036893">
    <property type="entry name" value="Lipocalin_ApoD"/>
    <property type="match status" value="1"/>
</dbReference>
<dbReference type="PRINTS" id="PR02058">
    <property type="entry name" value="APODVERTBRTE"/>
</dbReference>
<dbReference type="PRINTS" id="PR01219">
    <property type="entry name" value="APOLIPOPROTD"/>
</dbReference>
<dbReference type="PRINTS" id="PR00179">
    <property type="entry name" value="LIPOCALIN"/>
</dbReference>
<dbReference type="SUPFAM" id="SSF50814">
    <property type="entry name" value="Lipocalins"/>
    <property type="match status" value="1"/>
</dbReference>
<dbReference type="PROSITE" id="PS00213">
    <property type="entry name" value="LIPOCALIN"/>
    <property type="match status" value="1"/>
</dbReference>
<sequence>MVMLLLLLSALAGLFGAAEGQEFRLGKCTSPPVQENFDPNKYFGRWYEIEKIPTTFEKGRCIQANYSLKENGKIKVLNQELRADGTVNQIEGEASPVNITEPAKLEVKFFWFMPSAPYWVLATDYENYALVYSCVSIINLFRVDYAWILARNRHLPSETVDFLKNILTSNNIDVKKMTVTDQENCPEFS</sequence>
<reference key="1">
    <citation type="journal article" date="2002" name="Genomics">
        <title>Search for genes positively selected during primate evolution by 5'-end-sequence screening of cynomolgus monkey cDNAs.</title>
        <authorList>
            <person name="Osada N."/>
            <person name="Kusuda J."/>
            <person name="Hirata M."/>
            <person name="Tanuma R."/>
            <person name="Hida M."/>
            <person name="Sugano S."/>
            <person name="Hirai M."/>
            <person name="Hashimoto K."/>
        </authorList>
    </citation>
    <scope>NUCLEOTIDE SEQUENCE [LARGE SCALE MRNA]</scope>
    <source>
        <tissue>Brain cortex</tissue>
    </source>
</reference>
<protein>
    <recommendedName>
        <fullName>Apolipoprotein D</fullName>
        <shortName>Apo-D</shortName>
        <shortName>ApoD</shortName>
    </recommendedName>
</protein>
<accession>Q8SPI0</accession>
<organism>
    <name type="scientific">Macaca fascicularis</name>
    <name type="common">Crab-eating macaque</name>
    <name type="synonym">Cynomolgus monkey</name>
    <dbReference type="NCBI Taxonomy" id="9541"/>
    <lineage>
        <taxon>Eukaryota</taxon>
        <taxon>Metazoa</taxon>
        <taxon>Chordata</taxon>
        <taxon>Craniata</taxon>
        <taxon>Vertebrata</taxon>
        <taxon>Euteleostomi</taxon>
        <taxon>Mammalia</taxon>
        <taxon>Eutheria</taxon>
        <taxon>Euarchontoglires</taxon>
        <taxon>Primates</taxon>
        <taxon>Haplorrhini</taxon>
        <taxon>Catarrhini</taxon>
        <taxon>Cercopithecidae</taxon>
        <taxon>Cercopithecinae</taxon>
        <taxon>Macaca</taxon>
    </lineage>
</organism>
<evidence type="ECO:0000250" key="1"/>
<evidence type="ECO:0000250" key="2">
    <source>
        <dbReference type="UniProtKB" id="P05090"/>
    </source>
</evidence>
<evidence type="ECO:0000255" key="3"/>
<evidence type="ECO:0000305" key="4"/>
<proteinExistence type="evidence at transcript level"/>
<feature type="signal peptide" evidence="1">
    <location>
        <begin position="1"/>
        <end position="20"/>
    </location>
</feature>
<feature type="chain" id="PRO_0000017873" description="Apolipoprotein D">
    <location>
        <begin position="21"/>
        <end position="189"/>
    </location>
</feature>
<feature type="modified residue" description="Pyrrolidone carboxylic acid" evidence="2">
    <location>
        <position position="21"/>
    </location>
</feature>
<feature type="glycosylation site" description="N-linked (GlcNAc...) asparagine" evidence="3">
    <location>
        <position position="65"/>
    </location>
</feature>
<feature type="glycosylation site" description="N-linked (GlcNAc...) asparagine" evidence="3">
    <location>
        <position position="98"/>
    </location>
</feature>
<feature type="disulfide bond" evidence="1">
    <location>
        <begin position="28"/>
        <end position="134"/>
    </location>
</feature>
<feature type="disulfide bond" evidence="1">
    <location>
        <begin position="61"/>
        <end position="185"/>
    </location>
</feature>
<name>APOD_MACFA</name>